<comment type="function">
    <text evidence="3">Potential regulator of neural basic helix-loop-helix genes. It may down-regulate expression of ASCL1 and, within the thalamus, up-regulate NGN2, thereby regulating distinct patterns of neuronal differentiation.</text>
</comment>
<comment type="subcellular location">
    <subcellularLocation>
        <location>Nucleus</location>
    </subcellularLocation>
</comment>
<comment type="tissue specificity">
    <text evidence="3">Expressed in the ganglion cell layer of the retina in the eye and in the ventral zone of the dorsal thalamus of the CNS.</text>
</comment>
<comment type="developmental stage">
    <text evidence="3">Transiently expressed during embryonic development of the nervous system, detected at 11.5 dpc and declining after 15.5 dpc.</text>
</comment>
<comment type="similarity">
    <text evidence="4">Belongs to the BAR homeobox family.</text>
</comment>
<reference key="1">
    <citation type="journal article" date="1998" name="Dev. Biol.">
        <title>Mammalian BarH homologue is a potential regulator of neural bHLH genes.</title>
        <authorList>
            <person name="Saito T."/>
            <person name="Sawamoto K."/>
            <person name="Okano H."/>
            <person name="Anderson D.J."/>
            <person name="Mikoshiba K."/>
        </authorList>
    </citation>
    <scope>NUCLEOTIDE SEQUENCE [MRNA]</scope>
    <scope>FUNCTION</scope>
    <scope>TISSUE SPECIFICITY</scope>
    <scope>DEVELOPMENTAL STAGE</scope>
    <source>
        <strain>Sprague-Dawley</strain>
        <tissue>Head</tissue>
    </source>
</reference>
<dbReference type="EMBL" id="AB004056">
    <property type="protein sequence ID" value="BAA32474.1"/>
    <property type="molecule type" value="mRNA"/>
</dbReference>
<dbReference type="RefSeq" id="NP_075245.1">
    <property type="nucleotide sequence ID" value="NM_022956.2"/>
</dbReference>
<dbReference type="SMR" id="O88181"/>
<dbReference type="FunCoup" id="O88181">
    <property type="interactions" value="127"/>
</dbReference>
<dbReference type="STRING" id="10116.ENSRNOP00000002887"/>
<dbReference type="GlyGen" id="O88181">
    <property type="glycosylation" value="1 site"/>
</dbReference>
<dbReference type="PhosphoSitePlus" id="O88181"/>
<dbReference type="PaxDb" id="10116-ENSRNOP00000002887"/>
<dbReference type="Ensembl" id="ENSRNOT00000002887.4">
    <property type="protein sequence ID" value="ENSRNOP00000002887.2"/>
    <property type="gene ID" value="ENSRNOG00000002117.4"/>
</dbReference>
<dbReference type="GeneID" id="65050"/>
<dbReference type="KEGG" id="rno:65050"/>
<dbReference type="UCSC" id="RGD:620726">
    <property type="organism name" value="rat"/>
</dbReference>
<dbReference type="AGR" id="RGD:620726"/>
<dbReference type="CTD" id="343472"/>
<dbReference type="RGD" id="620726">
    <property type="gene designation" value="Barhl2"/>
</dbReference>
<dbReference type="eggNOG" id="KOG0488">
    <property type="taxonomic scope" value="Eukaryota"/>
</dbReference>
<dbReference type="GeneTree" id="ENSGT00940000158611"/>
<dbReference type="HOGENOM" id="CLU_074592_0_0_1"/>
<dbReference type="InParanoid" id="O88181"/>
<dbReference type="OMA" id="DLKCHGT"/>
<dbReference type="OrthoDB" id="6159439at2759"/>
<dbReference type="PhylomeDB" id="O88181"/>
<dbReference type="TreeFam" id="TF316128"/>
<dbReference type="PRO" id="PR:O88181"/>
<dbReference type="Proteomes" id="UP000002494">
    <property type="component" value="Chromosome 14"/>
</dbReference>
<dbReference type="Bgee" id="ENSRNOG00000002117">
    <property type="expression patterns" value="Expressed in cerebellum"/>
</dbReference>
<dbReference type="GO" id="GO:0005634">
    <property type="term" value="C:nucleus"/>
    <property type="evidence" value="ECO:0000266"/>
    <property type="project" value="RGD"/>
</dbReference>
<dbReference type="GO" id="GO:0001228">
    <property type="term" value="F:DNA-binding transcription activator activity, RNA polymerase II-specific"/>
    <property type="evidence" value="ECO:0000266"/>
    <property type="project" value="RGD"/>
</dbReference>
<dbReference type="GO" id="GO:0003700">
    <property type="term" value="F:DNA-binding transcription factor activity"/>
    <property type="evidence" value="ECO:0000314"/>
    <property type="project" value="RGD"/>
</dbReference>
<dbReference type="GO" id="GO:0000981">
    <property type="term" value="F:DNA-binding transcription factor activity, RNA polymerase II-specific"/>
    <property type="evidence" value="ECO:0000318"/>
    <property type="project" value="GO_Central"/>
</dbReference>
<dbReference type="GO" id="GO:0000977">
    <property type="term" value="F:RNA polymerase II transcription regulatory region sequence-specific DNA binding"/>
    <property type="evidence" value="ECO:0000318"/>
    <property type="project" value="GO_Central"/>
</dbReference>
<dbReference type="GO" id="GO:1990837">
    <property type="term" value="F:sequence-specific double-stranded DNA binding"/>
    <property type="evidence" value="ECO:0000266"/>
    <property type="project" value="RGD"/>
</dbReference>
<dbReference type="GO" id="GO:0035881">
    <property type="term" value="P:amacrine cell differentiation"/>
    <property type="evidence" value="ECO:0000266"/>
    <property type="project" value="RGD"/>
</dbReference>
<dbReference type="GO" id="GO:0045165">
    <property type="term" value="P:cell fate commitment"/>
    <property type="evidence" value="ECO:0000266"/>
    <property type="project" value="RGD"/>
</dbReference>
<dbReference type="GO" id="GO:0001709">
    <property type="term" value="P:cell fate determination"/>
    <property type="evidence" value="ECO:0000266"/>
    <property type="project" value="RGD"/>
</dbReference>
<dbReference type="GO" id="GO:0007399">
    <property type="term" value="P:nervous system development"/>
    <property type="evidence" value="ECO:0000314"/>
    <property type="project" value="RGD"/>
</dbReference>
<dbReference type="GO" id="GO:0030182">
    <property type="term" value="P:neuron differentiation"/>
    <property type="evidence" value="ECO:0000266"/>
    <property type="project" value="RGD"/>
</dbReference>
<dbReference type="GO" id="GO:0001764">
    <property type="term" value="P:neuron migration"/>
    <property type="evidence" value="ECO:0000266"/>
    <property type="project" value="RGD"/>
</dbReference>
<dbReference type="GO" id="GO:0045944">
    <property type="term" value="P:positive regulation of transcription by RNA polymerase II"/>
    <property type="evidence" value="ECO:0000266"/>
    <property type="project" value="RGD"/>
</dbReference>
<dbReference type="GO" id="GO:0045727">
    <property type="term" value="P:positive regulation of translation"/>
    <property type="evidence" value="ECO:0000266"/>
    <property type="project" value="RGD"/>
</dbReference>
<dbReference type="GO" id="GO:0030516">
    <property type="term" value="P:regulation of axon extension"/>
    <property type="evidence" value="ECO:0000266"/>
    <property type="project" value="RGD"/>
</dbReference>
<dbReference type="GO" id="GO:0045664">
    <property type="term" value="P:regulation of neuron differentiation"/>
    <property type="evidence" value="ECO:0000304"/>
    <property type="project" value="RGD"/>
</dbReference>
<dbReference type="GO" id="GO:0006357">
    <property type="term" value="P:regulation of transcription by RNA polymerase II"/>
    <property type="evidence" value="ECO:0000314"/>
    <property type="project" value="RGD"/>
</dbReference>
<dbReference type="CDD" id="cd00086">
    <property type="entry name" value="homeodomain"/>
    <property type="match status" value="1"/>
</dbReference>
<dbReference type="FunFam" id="1.10.10.60:FF:000097">
    <property type="entry name" value="barH-like 2 homeobox protein-like"/>
    <property type="match status" value="1"/>
</dbReference>
<dbReference type="Gene3D" id="1.10.10.60">
    <property type="entry name" value="Homeodomain-like"/>
    <property type="match status" value="1"/>
</dbReference>
<dbReference type="InterPro" id="IPR001356">
    <property type="entry name" value="HD"/>
</dbReference>
<dbReference type="InterPro" id="IPR020479">
    <property type="entry name" value="HD_metazoa"/>
</dbReference>
<dbReference type="InterPro" id="IPR017970">
    <property type="entry name" value="Homeobox_CS"/>
</dbReference>
<dbReference type="InterPro" id="IPR050848">
    <property type="entry name" value="Homeobox_TF"/>
</dbReference>
<dbReference type="InterPro" id="IPR009057">
    <property type="entry name" value="Homeodomain-like_sf"/>
</dbReference>
<dbReference type="PANTHER" id="PTHR24333">
    <property type="entry name" value="HOMEO BOX HB9 LIKE A-RELATED"/>
    <property type="match status" value="1"/>
</dbReference>
<dbReference type="PANTHER" id="PTHR24333:SF5">
    <property type="entry name" value="VENT HOMEOBOX"/>
    <property type="match status" value="1"/>
</dbReference>
<dbReference type="Pfam" id="PF00046">
    <property type="entry name" value="Homeodomain"/>
    <property type="match status" value="1"/>
</dbReference>
<dbReference type="PRINTS" id="PR00024">
    <property type="entry name" value="HOMEOBOX"/>
</dbReference>
<dbReference type="SMART" id="SM00389">
    <property type="entry name" value="HOX"/>
    <property type="match status" value="1"/>
</dbReference>
<dbReference type="SUPFAM" id="SSF46689">
    <property type="entry name" value="Homeodomain-like"/>
    <property type="match status" value="1"/>
</dbReference>
<dbReference type="PROSITE" id="PS00027">
    <property type="entry name" value="HOMEOBOX_1"/>
    <property type="match status" value="1"/>
</dbReference>
<dbReference type="PROSITE" id="PS50071">
    <property type="entry name" value="HOMEOBOX_2"/>
    <property type="match status" value="1"/>
</dbReference>
<sequence>MTAMEGASGSSFGIDTILSGAGSGSPGMMNGDFRSLGEARTTDFRSQATPSPCSEIDTVGTAPSSPISVTLEPPEPHLVTDGPQHHHHLHHGQQPPPPSAPPAQSLQPSPQQQPPPQPQSAAQQLGSAAAAPRTSTSSFLIKDILGDSKPLAACAPYSTSVSSPHHTPKQECNAAHESFRPKLEQEDSKTKLDKREDSQSDIKCHGTKEEGDREITSSRESPPVRAKKPRKARTAFSDHQLNQLERSFERQKYLSVQDRMDLAAALNLTDTQVKTWYQNRRTKWKRQTAVGLELLAEAGNYSALQRMFPSPYFYHPSLLGSMDSTTAAAAAAAMYSSMYRTPPAPHPQLQRPLVPRVLIHGLGPGGQPALNPLSNPIPGTPHPR</sequence>
<proteinExistence type="evidence at transcript level"/>
<feature type="chain" id="PRO_0000048831" description="BarH-like 2 homeobox protein">
    <location>
        <begin position="1"/>
        <end position="384"/>
    </location>
</feature>
<feature type="DNA-binding region" description="Homeobox" evidence="1">
    <location>
        <begin position="229"/>
        <end position="288"/>
    </location>
</feature>
<feature type="region of interest" description="Disordered" evidence="2">
    <location>
        <begin position="1"/>
        <end position="134"/>
    </location>
</feature>
<feature type="region of interest" description="Disordered" evidence="2">
    <location>
        <begin position="154"/>
        <end position="237"/>
    </location>
</feature>
<feature type="region of interest" description="Disordered" evidence="2">
    <location>
        <begin position="364"/>
        <end position="384"/>
    </location>
</feature>
<feature type="compositionally biased region" description="Low complexity" evidence="2">
    <location>
        <begin position="119"/>
        <end position="134"/>
    </location>
</feature>
<feature type="compositionally biased region" description="Basic and acidic residues" evidence="2">
    <location>
        <begin position="177"/>
        <end position="217"/>
    </location>
</feature>
<evidence type="ECO:0000255" key="1">
    <source>
        <dbReference type="PROSITE-ProRule" id="PRU00108"/>
    </source>
</evidence>
<evidence type="ECO:0000256" key="2">
    <source>
        <dbReference type="SAM" id="MobiDB-lite"/>
    </source>
</evidence>
<evidence type="ECO:0000269" key="3">
    <source>
    </source>
</evidence>
<evidence type="ECO:0000305" key="4"/>
<gene>
    <name type="primary">Barhl2</name>
    <name type="synonym">Mbh1</name>
</gene>
<keyword id="KW-0217">Developmental protein</keyword>
<keyword id="KW-0238">DNA-binding</keyword>
<keyword id="KW-0371">Homeobox</keyword>
<keyword id="KW-0539">Nucleus</keyword>
<keyword id="KW-1185">Reference proteome</keyword>
<keyword id="KW-0804">Transcription</keyword>
<keyword id="KW-0805">Transcription regulation</keyword>
<name>BARH2_RAT</name>
<accession>O88181</accession>
<organism>
    <name type="scientific">Rattus norvegicus</name>
    <name type="common">Rat</name>
    <dbReference type="NCBI Taxonomy" id="10116"/>
    <lineage>
        <taxon>Eukaryota</taxon>
        <taxon>Metazoa</taxon>
        <taxon>Chordata</taxon>
        <taxon>Craniata</taxon>
        <taxon>Vertebrata</taxon>
        <taxon>Euteleostomi</taxon>
        <taxon>Mammalia</taxon>
        <taxon>Eutheria</taxon>
        <taxon>Euarchontoglires</taxon>
        <taxon>Glires</taxon>
        <taxon>Rodentia</taxon>
        <taxon>Myomorpha</taxon>
        <taxon>Muroidea</taxon>
        <taxon>Muridae</taxon>
        <taxon>Murinae</taxon>
        <taxon>Rattus</taxon>
    </lineage>
</organism>
<protein>
    <recommendedName>
        <fullName>BarH-like 2 homeobox protein</fullName>
    </recommendedName>
    <alternativeName>
        <fullName>Bar-class homeodomain protein MBH1</fullName>
    </alternativeName>
    <alternativeName>
        <fullName>Homeobox protein B-H1</fullName>
    </alternativeName>
</protein>